<protein>
    <recommendedName>
        <fullName evidence="1">Ribosome maturation factor RimM</fullName>
    </recommendedName>
</protein>
<gene>
    <name evidence="1" type="primary">rimM</name>
    <name type="ordered locus">Shewana3_3016</name>
</gene>
<keyword id="KW-0143">Chaperone</keyword>
<keyword id="KW-0963">Cytoplasm</keyword>
<keyword id="KW-0690">Ribosome biogenesis</keyword>
<keyword id="KW-0698">rRNA processing</keyword>
<sequence>MSSNQQPVVLGKLGSCHGIKGWLKITAYTDSVEGIFDYSPWLIKENGEWREVKVIQWRYQGKAVVAELEGVTTRERAQMLTNCEIGILPEQMNDLPEDEFYWRDLIGCEVINTNGYNMGVVDQIVETGSNDVLLVKANAKDSFGKVERMLPFVPGQFILKVDVQGKQILVDWDPDF</sequence>
<dbReference type="EMBL" id="CP000469">
    <property type="protein sequence ID" value="ABK49241.1"/>
    <property type="molecule type" value="Genomic_DNA"/>
</dbReference>
<dbReference type="RefSeq" id="WP_011717865.1">
    <property type="nucleotide sequence ID" value="NC_008577.1"/>
</dbReference>
<dbReference type="SMR" id="A0KZM2"/>
<dbReference type="STRING" id="94122.Shewana3_3016"/>
<dbReference type="GeneID" id="94728939"/>
<dbReference type="KEGG" id="shn:Shewana3_3016"/>
<dbReference type="eggNOG" id="COG0806">
    <property type="taxonomic scope" value="Bacteria"/>
</dbReference>
<dbReference type="HOGENOM" id="CLU_077636_1_0_6"/>
<dbReference type="OrthoDB" id="9783509at2"/>
<dbReference type="Proteomes" id="UP000002589">
    <property type="component" value="Chromosome"/>
</dbReference>
<dbReference type="GO" id="GO:0005737">
    <property type="term" value="C:cytoplasm"/>
    <property type="evidence" value="ECO:0007669"/>
    <property type="project" value="UniProtKB-SubCell"/>
</dbReference>
<dbReference type="GO" id="GO:0005840">
    <property type="term" value="C:ribosome"/>
    <property type="evidence" value="ECO:0007669"/>
    <property type="project" value="InterPro"/>
</dbReference>
<dbReference type="GO" id="GO:0043022">
    <property type="term" value="F:ribosome binding"/>
    <property type="evidence" value="ECO:0007669"/>
    <property type="project" value="InterPro"/>
</dbReference>
<dbReference type="GO" id="GO:0042274">
    <property type="term" value="P:ribosomal small subunit biogenesis"/>
    <property type="evidence" value="ECO:0007669"/>
    <property type="project" value="UniProtKB-UniRule"/>
</dbReference>
<dbReference type="GO" id="GO:0006364">
    <property type="term" value="P:rRNA processing"/>
    <property type="evidence" value="ECO:0007669"/>
    <property type="project" value="UniProtKB-UniRule"/>
</dbReference>
<dbReference type="Gene3D" id="2.30.30.240">
    <property type="entry name" value="PRC-barrel domain"/>
    <property type="match status" value="1"/>
</dbReference>
<dbReference type="Gene3D" id="2.40.30.60">
    <property type="entry name" value="RimM"/>
    <property type="match status" value="1"/>
</dbReference>
<dbReference type="HAMAP" id="MF_00014">
    <property type="entry name" value="Ribosome_mat_RimM"/>
    <property type="match status" value="1"/>
</dbReference>
<dbReference type="InterPro" id="IPR027275">
    <property type="entry name" value="PRC-brl_dom"/>
</dbReference>
<dbReference type="InterPro" id="IPR011033">
    <property type="entry name" value="PRC_barrel-like_sf"/>
</dbReference>
<dbReference type="InterPro" id="IPR011961">
    <property type="entry name" value="RimM"/>
</dbReference>
<dbReference type="InterPro" id="IPR002676">
    <property type="entry name" value="RimM_N"/>
</dbReference>
<dbReference type="InterPro" id="IPR036976">
    <property type="entry name" value="RimM_N_sf"/>
</dbReference>
<dbReference type="InterPro" id="IPR009000">
    <property type="entry name" value="Transl_B-barrel_sf"/>
</dbReference>
<dbReference type="NCBIfam" id="TIGR02273">
    <property type="entry name" value="16S_RimM"/>
    <property type="match status" value="1"/>
</dbReference>
<dbReference type="PANTHER" id="PTHR33692">
    <property type="entry name" value="RIBOSOME MATURATION FACTOR RIMM"/>
    <property type="match status" value="1"/>
</dbReference>
<dbReference type="PANTHER" id="PTHR33692:SF1">
    <property type="entry name" value="RIBOSOME MATURATION FACTOR RIMM"/>
    <property type="match status" value="1"/>
</dbReference>
<dbReference type="Pfam" id="PF05239">
    <property type="entry name" value="PRC"/>
    <property type="match status" value="1"/>
</dbReference>
<dbReference type="Pfam" id="PF01782">
    <property type="entry name" value="RimM"/>
    <property type="match status" value="1"/>
</dbReference>
<dbReference type="SUPFAM" id="SSF50346">
    <property type="entry name" value="PRC-barrel domain"/>
    <property type="match status" value="1"/>
</dbReference>
<dbReference type="SUPFAM" id="SSF50447">
    <property type="entry name" value="Translation proteins"/>
    <property type="match status" value="1"/>
</dbReference>
<proteinExistence type="inferred from homology"/>
<reference key="1">
    <citation type="submission" date="2006-09" db="EMBL/GenBank/DDBJ databases">
        <title>Complete sequence of chromosome 1 of Shewanella sp. ANA-3.</title>
        <authorList>
            <person name="Copeland A."/>
            <person name="Lucas S."/>
            <person name="Lapidus A."/>
            <person name="Barry K."/>
            <person name="Detter J.C."/>
            <person name="Glavina del Rio T."/>
            <person name="Hammon N."/>
            <person name="Israni S."/>
            <person name="Dalin E."/>
            <person name="Tice H."/>
            <person name="Pitluck S."/>
            <person name="Chertkov O."/>
            <person name="Brettin T."/>
            <person name="Bruce D."/>
            <person name="Han C."/>
            <person name="Tapia R."/>
            <person name="Gilna P."/>
            <person name="Schmutz J."/>
            <person name="Larimer F."/>
            <person name="Land M."/>
            <person name="Hauser L."/>
            <person name="Kyrpides N."/>
            <person name="Kim E."/>
            <person name="Newman D."/>
            <person name="Salticov C."/>
            <person name="Konstantinidis K."/>
            <person name="Klappenback J."/>
            <person name="Tiedje J."/>
            <person name="Richardson P."/>
        </authorList>
    </citation>
    <scope>NUCLEOTIDE SEQUENCE [LARGE SCALE GENOMIC DNA]</scope>
    <source>
        <strain>ANA-3</strain>
    </source>
</reference>
<accession>A0KZM2</accession>
<name>RIMM_SHESA</name>
<organism>
    <name type="scientific">Shewanella sp. (strain ANA-3)</name>
    <dbReference type="NCBI Taxonomy" id="94122"/>
    <lineage>
        <taxon>Bacteria</taxon>
        <taxon>Pseudomonadati</taxon>
        <taxon>Pseudomonadota</taxon>
        <taxon>Gammaproteobacteria</taxon>
        <taxon>Alteromonadales</taxon>
        <taxon>Shewanellaceae</taxon>
        <taxon>Shewanella</taxon>
    </lineage>
</organism>
<evidence type="ECO:0000255" key="1">
    <source>
        <dbReference type="HAMAP-Rule" id="MF_00014"/>
    </source>
</evidence>
<feature type="chain" id="PRO_0000321759" description="Ribosome maturation factor RimM">
    <location>
        <begin position="1"/>
        <end position="176"/>
    </location>
</feature>
<feature type="domain" description="PRC barrel" evidence="1">
    <location>
        <begin position="97"/>
        <end position="176"/>
    </location>
</feature>
<comment type="function">
    <text evidence="1">An accessory protein needed during the final step in the assembly of 30S ribosomal subunit, possibly for assembly of the head region. Essential for efficient processing of 16S rRNA. May be needed both before and after RbfA during the maturation of 16S rRNA. It has affinity for free ribosomal 30S subunits but not for 70S ribosomes.</text>
</comment>
<comment type="subunit">
    <text evidence="1">Binds ribosomal protein uS19.</text>
</comment>
<comment type="subcellular location">
    <subcellularLocation>
        <location evidence="1">Cytoplasm</location>
    </subcellularLocation>
</comment>
<comment type="domain">
    <text evidence="1">The PRC barrel domain binds ribosomal protein uS19.</text>
</comment>
<comment type="similarity">
    <text evidence="1">Belongs to the RimM family.</text>
</comment>